<accession>Q8DS30</accession>
<organism>
    <name type="scientific">Streptococcus mutans serotype c (strain ATCC 700610 / UA159)</name>
    <dbReference type="NCBI Taxonomy" id="210007"/>
    <lineage>
        <taxon>Bacteria</taxon>
        <taxon>Bacillati</taxon>
        <taxon>Bacillota</taxon>
        <taxon>Bacilli</taxon>
        <taxon>Lactobacillales</taxon>
        <taxon>Streptococcaceae</taxon>
        <taxon>Streptococcus</taxon>
    </lineage>
</organism>
<keyword id="KW-1185">Reference proteome</keyword>
<keyword id="KW-0687">Ribonucleoprotein</keyword>
<keyword id="KW-0689">Ribosomal protein</keyword>
<proteinExistence type="inferred from homology"/>
<evidence type="ECO:0000255" key="1">
    <source>
        <dbReference type="HAMAP-Rule" id="MF_01371"/>
    </source>
</evidence>
<evidence type="ECO:0000305" key="2"/>
<dbReference type="EMBL" id="AE014133">
    <property type="protein sequence ID" value="AAN59612.1"/>
    <property type="molecule type" value="Genomic_DNA"/>
</dbReference>
<dbReference type="RefSeq" id="NP_722306.1">
    <property type="nucleotide sequence ID" value="NC_004350.2"/>
</dbReference>
<dbReference type="RefSeq" id="WP_002262322.1">
    <property type="nucleotide sequence ID" value="NC_004350.2"/>
</dbReference>
<dbReference type="SMR" id="Q8DS30"/>
<dbReference type="STRING" id="210007.SMU_2008"/>
<dbReference type="GeneID" id="93860211"/>
<dbReference type="KEGG" id="smu:SMU_2008"/>
<dbReference type="PATRIC" id="fig|210007.7.peg.1789"/>
<dbReference type="eggNOG" id="COG1841">
    <property type="taxonomic scope" value="Bacteria"/>
</dbReference>
<dbReference type="HOGENOM" id="CLU_131047_2_1_9"/>
<dbReference type="OrthoDB" id="9812790at2"/>
<dbReference type="PhylomeDB" id="Q8DS30"/>
<dbReference type="Proteomes" id="UP000002512">
    <property type="component" value="Chromosome"/>
</dbReference>
<dbReference type="GO" id="GO:0022625">
    <property type="term" value="C:cytosolic large ribosomal subunit"/>
    <property type="evidence" value="ECO:0007669"/>
    <property type="project" value="TreeGrafter"/>
</dbReference>
<dbReference type="GO" id="GO:0003735">
    <property type="term" value="F:structural constituent of ribosome"/>
    <property type="evidence" value="ECO:0007669"/>
    <property type="project" value="InterPro"/>
</dbReference>
<dbReference type="GO" id="GO:0006412">
    <property type="term" value="P:translation"/>
    <property type="evidence" value="ECO:0007669"/>
    <property type="project" value="UniProtKB-UniRule"/>
</dbReference>
<dbReference type="CDD" id="cd01658">
    <property type="entry name" value="Ribosomal_L30"/>
    <property type="match status" value="1"/>
</dbReference>
<dbReference type="FunFam" id="3.30.1390.20:FF:000001">
    <property type="entry name" value="50S ribosomal protein L30"/>
    <property type="match status" value="1"/>
</dbReference>
<dbReference type="Gene3D" id="3.30.1390.20">
    <property type="entry name" value="Ribosomal protein L30, ferredoxin-like fold domain"/>
    <property type="match status" value="1"/>
</dbReference>
<dbReference type="HAMAP" id="MF_01371_B">
    <property type="entry name" value="Ribosomal_uL30_B"/>
    <property type="match status" value="1"/>
</dbReference>
<dbReference type="InterPro" id="IPR036919">
    <property type="entry name" value="Ribo_uL30_ferredoxin-like_sf"/>
</dbReference>
<dbReference type="InterPro" id="IPR005996">
    <property type="entry name" value="Ribosomal_uL30_bac-type"/>
</dbReference>
<dbReference type="InterPro" id="IPR018038">
    <property type="entry name" value="Ribosomal_uL30_CS"/>
</dbReference>
<dbReference type="InterPro" id="IPR016082">
    <property type="entry name" value="Ribosomal_uL30_ferredoxin-like"/>
</dbReference>
<dbReference type="NCBIfam" id="TIGR01308">
    <property type="entry name" value="rpmD_bact"/>
    <property type="match status" value="1"/>
</dbReference>
<dbReference type="PANTHER" id="PTHR15892:SF2">
    <property type="entry name" value="LARGE RIBOSOMAL SUBUNIT PROTEIN UL30M"/>
    <property type="match status" value="1"/>
</dbReference>
<dbReference type="PANTHER" id="PTHR15892">
    <property type="entry name" value="MITOCHONDRIAL RIBOSOMAL PROTEIN L30"/>
    <property type="match status" value="1"/>
</dbReference>
<dbReference type="Pfam" id="PF00327">
    <property type="entry name" value="Ribosomal_L30"/>
    <property type="match status" value="1"/>
</dbReference>
<dbReference type="PIRSF" id="PIRSF002211">
    <property type="entry name" value="Ribosomal_L30_bac-type"/>
    <property type="match status" value="1"/>
</dbReference>
<dbReference type="SUPFAM" id="SSF55129">
    <property type="entry name" value="Ribosomal protein L30p/L7e"/>
    <property type="match status" value="1"/>
</dbReference>
<dbReference type="PROSITE" id="PS00634">
    <property type="entry name" value="RIBOSOMAL_L30"/>
    <property type="match status" value="1"/>
</dbReference>
<reference key="1">
    <citation type="journal article" date="2002" name="Proc. Natl. Acad. Sci. U.S.A.">
        <title>Genome sequence of Streptococcus mutans UA159, a cariogenic dental pathogen.</title>
        <authorList>
            <person name="Ajdic D.J."/>
            <person name="McShan W.M."/>
            <person name="McLaughlin R.E."/>
            <person name="Savic G."/>
            <person name="Chang J."/>
            <person name="Carson M.B."/>
            <person name="Primeaux C."/>
            <person name="Tian R."/>
            <person name="Kenton S."/>
            <person name="Jia H.G."/>
            <person name="Lin S.P."/>
            <person name="Qian Y."/>
            <person name="Li S."/>
            <person name="Zhu H."/>
            <person name="Najar F.Z."/>
            <person name="Lai H."/>
            <person name="White J."/>
            <person name="Roe B.A."/>
            <person name="Ferretti J.J."/>
        </authorList>
    </citation>
    <scope>NUCLEOTIDE SEQUENCE [LARGE SCALE GENOMIC DNA]</scope>
    <source>
        <strain>ATCC 700610 / UA159</strain>
    </source>
</reference>
<protein>
    <recommendedName>
        <fullName evidence="1">Large ribosomal subunit protein uL30</fullName>
    </recommendedName>
    <alternativeName>
        <fullName evidence="2">50S ribosomal protein L30</fullName>
    </alternativeName>
</protein>
<name>RL30_STRMU</name>
<gene>
    <name evidence="1" type="primary">rpmD</name>
    <name type="ordered locus">SMU_2008</name>
</gene>
<comment type="subunit">
    <text evidence="1">Part of the 50S ribosomal subunit.</text>
</comment>
<comment type="similarity">
    <text evidence="1">Belongs to the universal ribosomal protein uL30 family.</text>
</comment>
<feature type="chain" id="PRO_0000273865" description="Large ribosomal subunit protein uL30">
    <location>
        <begin position="1"/>
        <end position="60"/>
    </location>
</feature>
<sequence length="60" mass="6382">MAQIKITLTKSPIGRIPAQRKTVVALGLGKLNSSVIKEDNAAIRGMVNAVSHLVTVEDVK</sequence>